<accession>Q9PRT7</accession>
<dbReference type="GO" id="GO:0005576">
    <property type="term" value="C:extracellular region"/>
    <property type="evidence" value="ECO:0007669"/>
    <property type="project" value="UniProtKB-SubCell"/>
</dbReference>
<dbReference type="GO" id="GO:0090729">
    <property type="term" value="F:toxin activity"/>
    <property type="evidence" value="ECO:0007669"/>
    <property type="project" value="UniProtKB-KW"/>
</dbReference>
<name>PA2H4_BOTAS</name>
<protein>
    <recommendedName>
        <fullName evidence="4">Phospholipase A2 homolog 4</fullName>
        <shortName>svPLA2 homolog</shortName>
    </recommendedName>
    <alternativeName>
        <fullName evidence="3">Myotoxin IV</fullName>
    </alternativeName>
</protein>
<organism>
    <name type="scientific">Bothrops asper</name>
    <name type="common">Terciopelo</name>
    <dbReference type="NCBI Taxonomy" id="8722"/>
    <lineage>
        <taxon>Eukaryota</taxon>
        <taxon>Metazoa</taxon>
        <taxon>Chordata</taxon>
        <taxon>Craniata</taxon>
        <taxon>Vertebrata</taxon>
        <taxon>Euteleostomi</taxon>
        <taxon>Lepidosauria</taxon>
        <taxon>Squamata</taxon>
        <taxon>Bifurcata</taxon>
        <taxon>Unidentata</taxon>
        <taxon>Episquamata</taxon>
        <taxon>Toxicofera</taxon>
        <taxon>Serpentes</taxon>
        <taxon>Colubroidea</taxon>
        <taxon>Viperidae</taxon>
        <taxon>Crotalinae</taxon>
        <taxon>Bothrops</taxon>
    </lineage>
</organism>
<sequence>SLVELGKMILQETGKNPVTYGAY</sequence>
<comment type="function">
    <text evidence="1 2">Snake venom phospholipase A2 homolog that lacks enzymatic activity (PubMed:7749580). Induces acute muscle damage after intramuscular injection in mice and disrupts negatively charged liposomes but not positively charged ones (PubMed:7749580). Also exerts a weak anticoagulant effect only at concentrations of 40 ug/ml or higher (PubMed:7749580). A model of myotoxic mechanism has been proposed: an apo Lys49-PLA2 is activated by the entrance of a hydrophobic molecule (e.g. fatty acid) at the hydrophobic channel of the protein leading to a reorientation of a monomer (By similarity). This reorientation causes a transition between 'inactive' to 'active' states, causing alignment of C-terminal and membrane-docking sites (MDoS) side-by-side and putting the membrane-disruption sites (MDiS) in the same plane, exposed to solvent and in a symmetric position for both monomers (By similarity). The MDoS region stabilizes the toxin on membrane by the interaction of charged residues with phospholipid head groups (By similarity). Subsequently, the MDiS region destabilizes the membrane with penetration of hydrophobic residues (By similarity). This insertion causes a disorganization of the membrane, allowing an uncontrolled influx of ions (i.e. calcium and sodium), and eventually triggering irreversible intracellular alterations and cell death (By similarity).</text>
</comment>
<comment type="subunit">
    <text evidence="1">Homodimer; non-covalently linked (probable alternative/compact dimer conformation in solution).</text>
</comment>
<comment type="subcellular location">
    <subcellularLocation>
        <location evidence="2">Secreted</location>
    </subcellularLocation>
</comment>
<comment type="tissue specificity">
    <text evidence="5">Expressed by the venom gland.</text>
</comment>
<comment type="similarity">
    <text evidence="4">Belongs to the phospholipase A2 family. Group II subfamily. K49 sub-subfamily.</text>
</comment>
<evidence type="ECO:0000250" key="1">
    <source>
        <dbReference type="UniProtKB" id="I6L8L6"/>
    </source>
</evidence>
<evidence type="ECO:0000269" key="2">
    <source>
    </source>
</evidence>
<evidence type="ECO:0000303" key="3">
    <source>
    </source>
</evidence>
<evidence type="ECO:0000305" key="4"/>
<evidence type="ECO:0000305" key="5">
    <source>
    </source>
</evidence>
<reference key="1">
    <citation type="journal article" date="1995" name="Nat. Toxins">
        <title>Purification and characterization of myotoxin IV, a phospholipase A2 variant, from Bothrops asper snake venom.</title>
        <authorList>
            <person name="Diaz C."/>
            <person name="Lomonte B."/>
            <person name="Zamudio F."/>
            <person name="Gutierrez J.M."/>
        </authorList>
    </citation>
    <scope>PROTEIN SEQUENCE</scope>
    <scope>FUNCTION</scope>
    <scope>SUBCELLULAR LOCATION</scope>
    <source>
        <tissue>Venom</tissue>
    </source>
</reference>
<feature type="chain" id="PRO_0000161619" description="Phospholipase A2 homolog 4">
    <location>
        <begin position="1"/>
        <end position="23" status="greater than"/>
    </location>
</feature>
<feature type="non-terminal residue">
    <location>
        <position position="23"/>
    </location>
</feature>
<proteinExistence type="evidence at protein level"/>
<keyword id="KW-1203">Blood coagulation cascade inhibiting toxin</keyword>
<keyword id="KW-0903">Direct protein sequencing</keyword>
<keyword id="KW-1199">Hemostasis impairing toxin</keyword>
<keyword id="KW-0959">Myotoxin</keyword>
<keyword id="KW-0964">Secreted</keyword>
<keyword id="KW-0800">Toxin</keyword>